<protein>
    <recommendedName>
        <fullName evidence="1">ATP synthase subunit a</fullName>
    </recommendedName>
    <alternativeName>
        <fullName evidence="1">ATP synthase F0 sector subunit a</fullName>
    </alternativeName>
    <alternativeName>
        <fullName evidence="1">F-ATPase subunit 6</fullName>
    </alternativeName>
</protein>
<reference key="1">
    <citation type="submission" date="2007-10" db="EMBL/GenBank/DDBJ databases">
        <title>Genome sequence of Campylobacter concisus 13826 isolated from human feces.</title>
        <authorList>
            <person name="Fouts D.E."/>
            <person name="Mongodin E.F."/>
            <person name="Puiu D."/>
            <person name="Sebastian Y."/>
            <person name="Miller W.G."/>
            <person name="Mandrell R.E."/>
            <person name="On S."/>
            <person name="Nelson K.E."/>
        </authorList>
    </citation>
    <scope>NUCLEOTIDE SEQUENCE [LARGE SCALE GENOMIC DNA]</scope>
    <source>
        <strain>13826</strain>
    </source>
</reference>
<organism>
    <name type="scientific">Campylobacter concisus (strain 13826)</name>
    <dbReference type="NCBI Taxonomy" id="360104"/>
    <lineage>
        <taxon>Bacteria</taxon>
        <taxon>Pseudomonadati</taxon>
        <taxon>Campylobacterota</taxon>
        <taxon>Epsilonproteobacteria</taxon>
        <taxon>Campylobacterales</taxon>
        <taxon>Campylobacteraceae</taxon>
        <taxon>Campylobacter</taxon>
    </lineage>
</organism>
<proteinExistence type="inferred from homology"/>
<dbReference type="EMBL" id="CP000792">
    <property type="protein sequence ID" value="EAT97522.1"/>
    <property type="molecule type" value="Genomic_DNA"/>
</dbReference>
<dbReference type="RefSeq" id="WP_002942300.1">
    <property type="nucleotide sequence ID" value="NC_009802.2"/>
</dbReference>
<dbReference type="SMR" id="A7ZD62"/>
<dbReference type="STRING" id="360104.CCC13826_0159"/>
<dbReference type="KEGG" id="cco:CCC13826_0159"/>
<dbReference type="eggNOG" id="COG0356">
    <property type="taxonomic scope" value="Bacteria"/>
</dbReference>
<dbReference type="HOGENOM" id="CLU_041018_2_2_7"/>
<dbReference type="OrthoDB" id="9789241at2"/>
<dbReference type="Proteomes" id="UP000001121">
    <property type="component" value="Chromosome"/>
</dbReference>
<dbReference type="GO" id="GO:0005886">
    <property type="term" value="C:plasma membrane"/>
    <property type="evidence" value="ECO:0007669"/>
    <property type="project" value="UniProtKB-SubCell"/>
</dbReference>
<dbReference type="GO" id="GO:0045259">
    <property type="term" value="C:proton-transporting ATP synthase complex"/>
    <property type="evidence" value="ECO:0007669"/>
    <property type="project" value="UniProtKB-KW"/>
</dbReference>
<dbReference type="GO" id="GO:0046933">
    <property type="term" value="F:proton-transporting ATP synthase activity, rotational mechanism"/>
    <property type="evidence" value="ECO:0007669"/>
    <property type="project" value="UniProtKB-UniRule"/>
</dbReference>
<dbReference type="GO" id="GO:0042777">
    <property type="term" value="P:proton motive force-driven plasma membrane ATP synthesis"/>
    <property type="evidence" value="ECO:0007669"/>
    <property type="project" value="TreeGrafter"/>
</dbReference>
<dbReference type="CDD" id="cd00310">
    <property type="entry name" value="ATP-synt_Fo_a_6"/>
    <property type="match status" value="1"/>
</dbReference>
<dbReference type="FunFam" id="1.20.120.220:FF:000006">
    <property type="entry name" value="ATP synthase subunit a"/>
    <property type="match status" value="1"/>
</dbReference>
<dbReference type="Gene3D" id="1.20.120.220">
    <property type="entry name" value="ATP synthase, F0 complex, subunit A"/>
    <property type="match status" value="1"/>
</dbReference>
<dbReference type="HAMAP" id="MF_01393">
    <property type="entry name" value="ATP_synth_a_bact"/>
    <property type="match status" value="1"/>
</dbReference>
<dbReference type="InterPro" id="IPR045082">
    <property type="entry name" value="ATP_syn_F0_a_bact/chloroplast"/>
</dbReference>
<dbReference type="InterPro" id="IPR000568">
    <property type="entry name" value="ATP_synth_F0_asu"/>
</dbReference>
<dbReference type="InterPro" id="IPR023011">
    <property type="entry name" value="ATP_synth_F0_asu_AS"/>
</dbReference>
<dbReference type="InterPro" id="IPR035908">
    <property type="entry name" value="F0_ATP_A_sf"/>
</dbReference>
<dbReference type="NCBIfam" id="TIGR01131">
    <property type="entry name" value="ATP_synt_6_or_A"/>
    <property type="match status" value="1"/>
</dbReference>
<dbReference type="NCBIfam" id="NF004481">
    <property type="entry name" value="PRK05815.2-3"/>
    <property type="match status" value="1"/>
</dbReference>
<dbReference type="PANTHER" id="PTHR42823">
    <property type="entry name" value="ATP SYNTHASE SUBUNIT A, CHLOROPLASTIC"/>
    <property type="match status" value="1"/>
</dbReference>
<dbReference type="PANTHER" id="PTHR42823:SF3">
    <property type="entry name" value="ATP SYNTHASE SUBUNIT A, CHLOROPLASTIC"/>
    <property type="match status" value="1"/>
</dbReference>
<dbReference type="Pfam" id="PF00119">
    <property type="entry name" value="ATP-synt_A"/>
    <property type="match status" value="1"/>
</dbReference>
<dbReference type="PRINTS" id="PR00123">
    <property type="entry name" value="ATPASEA"/>
</dbReference>
<dbReference type="SUPFAM" id="SSF81336">
    <property type="entry name" value="F1F0 ATP synthase subunit A"/>
    <property type="match status" value="1"/>
</dbReference>
<dbReference type="PROSITE" id="PS00449">
    <property type="entry name" value="ATPASE_A"/>
    <property type="match status" value="1"/>
</dbReference>
<comment type="function">
    <text evidence="1">Key component of the proton channel; it plays a direct role in the translocation of protons across the membrane.</text>
</comment>
<comment type="subunit">
    <text evidence="1">F-type ATPases have 2 components, CF(1) - the catalytic core - and CF(0) - the membrane proton channel. CF(1) has five subunits: alpha(3), beta(3), gamma(1), delta(1), epsilon(1). CF(0) has three main subunits: a(1), b(2) and c(9-12). The alpha and beta chains form an alternating ring which encloses part of the gamma chain. CF(1) is attached to CF(0) by a central stalk formed by the gamma and epsilon chains, while a peripheral stalk is formed by the delta and b chains.</text>
</comment>
<comment type="subcellular location">
    <subcellularLocation>
        <location evidence="1">Cell inner membrane</location>
        <topology evidence="1">Multi-pass membrane protein</topology>
    </subcellularLocation>
</comment>
<comment type="similarity">
    <text evidence="1">Belongs to the ATPase A chain family.</text>
</comment>
<sequence length="227" mass="25460">MKDLFLFSNLLNHSHAFVYAFHFCLVALIILIVAYIARSKMQLVPRGLQNIVEAYLEGVISMGKDTLGSEKLARKYLPLVATIGFIVFFSNVIGIIPGFESPSSSLNLTLVLALVVFIYYNFEGIRENGFFKYFGHFMGPNKFLAPIMFPVEVISHLSRVVSLSFRLFGNIKGDDLFLLAMLTLAPWFAPLPAFALLTLMAVLQTFIFMMLTYVYLAGAVAISEHEH</sequence>
<gene>
    <name evidence="1" type="primary">atpB</name>
    <name type="ordered locus">Ccon26_08480</name>
    <name type="ORF">CCC13826_0159</name>
</gene>
<evidence type="ECO:0000255" key="1">
    <source>
        <dbReference type="HAMAP-Rule" id="MF_01393"/>
    </source>
</evidence>
<accession>A7ZD62</accession>
<name>ATP6_CAMC1</name>
<keyword id="KW-0066">ATP synthesis</keyword>
<keyword id="KW-0997">Cell inner membrane</keyword>
<keyword id="KW-1003">Cell membrane</keyword>
<keyword id="KW-0138">CF(0)</keyword>
<keyword id="KW-0375">Hydrogen ion transport</keyword>
<keyword id="KW-0406">Ion transport</keyword>
<keyword id="KW-0472">Membrane</keyword>
<keyword id="KW-0812">Transmembrane</keyword>
<keyword id="KW-1133">Transmembrane helix</keyword>
<keyword id="KW-0813">Transport</keyword>
<feature type="chain" id="PRO_0000362260" description="ATP synthase subunit a">
    <location>
        <begin position="1"/>
        <end position="227"/>
    </location>
</feature>
<feature type="transmembrane region" description="Helical" evidence="1">
    <location>
        <begin position="16"/>
        <end position="36"/>
    </location>
</feature>
<feature type="transmembrane region" description="Helical" evidence="1">
    <location>
        <begin position="79"/>
        <end position="99"/>
    </location>
</feature>
<feature type="transmembrane region" description="Helical" evidence="1">
    <location>
        <begin position="105"/>
        <end position="125"/>
    </location>
</feature>
<feature type="transmembrane region" description="Helical" evidence="1">
    <location>
        <begin position="176"/>
        <end position="196"/>
    </location>
</feature>
<feature type="transmembrane region" description="Helical" evidence="1">
    <location>
        <begin position="202"/>
        <end position="222"/>
    </location>
</feature>